<keyword id="KW-0072">Autophagy</keyword>
<keyword id="KW-0963">Cytoplasm</keyword>
<keyword id="KW-0653">Protein transport</keyword>
<keyword id="KW-1185">Reference proteome</keyword>
<keyword id="KW-0813">Transport</keyword>
<keyword id="KW-0833">Ubl conjugation pathway</keyword>
<gene>
    <name type="primary">ATG7</name>
    <name type="ORF">MGG_07297</name>
</gene>
<sequence length="714" mass="79179">MSGNDEAAAAGVAPPQTLQFAPFESQIEMPFYSALFSRKLDHDKLDDSVRPVIGLYQPMSERPPAESTRMQIQGGALSSSHVPMGYTRADGSIRNFNTIEDFKKADKGAILRQAGAQIWDAIKDGSIYEIPSLLSSFAILSYADLKKYRFTYWFAYPTLHSVPAWRRDGPLARFSSKETTALVNEVGTFRYAHDTRQHGFFLAKKVPYRSGPFRRGLPRDDSDGDDIGFTWSIGALGEFEKGFFKGIKEEDQYIAFVDSSSYAENPSWPLRNLLVLIRQRFQLQKANILCYRDTQARRDEPRSIVLPLASEGPATPQTSEMPKVTGWERHPSSKLQARVISLAEYMDPTRIADQAVDLNLKLMKWRISPKLDLEAMRSLKCLLLGAGTLGSYVSRNLMGWGVRKITFVDYGNVSFSNPVRQPLFEFEDCLSGGVPKAPKAAEALKKINPGVEAEGHVLSVPMLGHPVLNEAQTKEDFEKLQQLIKAHDVVFLLMDTRESRWLPTVMGKAEGKIVMNAALGFDTYVVMRHGAAPKDGTESTLGCYFCNDVVAPSDSMKDQTLDQQCTVTRPGVAAIASAMLVEMLTSVLQHPQREHAPAPKATGPPGNPEYQRDPPDHALGIVPHQVRGFLANFQNMIISGESYPNCSACSSPIVGAYKSDGWEFVKKALSDKDYVLELSGLAEVQRQAEAMQNEVDWDEDEDVAAAEEGDGEML</sequence>
<dbReference type="EMBL" id="CM001232">
    <property type="protein sequence ID" value="EHA55718.1"/>
    <property type="molecule type" value="Genomic_DNA"/>
</dbReference>
<dbReference type="RefSeq" id="XP_003715525.1">
    <property type="nucleotide sequence ID" value="XM_003715477.1"/>
</dbReference>
<dbReference type="SMR" id="Q52CS0"/>
<dbReference type="FunCoup" id="Q52CS0">
    <property type="interactions" value="732"/>
</dbReference>
<dbReference type="STRING" id="242507.Q52CS0"/>
<dbReference type="EnsemblFungi" id="MGG_07297T0">
    <property type="protein sequence ID" value="MGG_07297T0"/>
    <property type="gene ID" value="MGG_07297"/>
</dbReference>
<dbReference type="GeneID" id="2683193"/>
<dbReference type="KEGG" id="mgr:MGG_07297"/>
<dbReference type="VEuPathDB" id="FungiDB:MGG_07297"/>
<dbReference type="eggNOG" id="KOG2337">
    <property type="taxonomic scope" value="Eukaryota"/>
</dbReference>
<dbReference type="HOGENOM" id="CLU_012998_2_1_1"/>
<dbReference type="InParanoid" id="Q52CS0"/>
<dbReference type="OMA" id="RQIWDAI"/>
<dbReference type="OrthoDB" id="338614at2759"/>
<dbReference type="PHI-base" id="PHI:2075"/>
<dbReference type="Proteomes" id="UP000009058">
    <property type="component" value="Chromosome 2"/>
</dbReference>
<dbReference type="GO" id="GO:0000407">
    <property type="term" value="C:phagophore assembly site"/>
    <property type="evidence" value="ECO:0007669"/>
    <property type="project" value="UniProtKB-SubCell"/>
</dbReference>
<dbReference type="GO" id="GO:0019778">
    <property type="term" value="F:Atg12 activating enzyme activity"/>
    <property type="evidence" value="ECO:0007669"/>
    <property type="project" value="TreeGrafter"/>
</dbReference>
<dbReference type="GO" id="GO:0019779">
    <property type="term" value="F:Atg8 activating enzyme activity"/>
    <property type="evidence" value="ECO:0007669"/>
    <property type="project" value="TreeGrafter"/>
</dbReference>
<dbReference type="GO" id="GO:0000045">
    <property type="term" value="P:autophagosome assembly"/>
    <property type="evidence" value="ECO:0007669"/>
    <property type="project" value="TreeGrafter"/>
</dbReference>
<dbReference type="GO" id="GO:0000422">
    <property type="term" value="P:autophagy of mitochondrion"/>
    <property type="evidence" value="ECO:0007669"/>
    <property type="project" value="TreeGrafter"/>
</dbReference>
<dbReference type="GO" id="GO:0006995">
    <property type="term" value="P:cellular response to nitrogen starvation"/>
    <property type="evidence" value="ECO:0007669"/>
    <property type="project" value="TreeGrafter"/>
</dbReference>
<dbReference type="GO" id="GO:0034727">
    <property type="term" value="P:piecemeal microautophagy of the nucleus"/>
    <property type="evidence" value="ECO:0007669"/>
    <property type="project" value="TreeGrafter"/>
</dbReference>
<dbReference type="GO" id="GO:0032446">
    <property type="term" value="P:protein modification by small protein conjugation"/>
    <property type="evidence" value="ECO:0007669"/>
    <property type="project" value="TreeGrafter"/>
</dbReference>
<dbReference type="GO" id="GO:0015031">
    <property type="term" value="P:protein transport"/>
    <property type="evidence" value="ECO:0007669"/>
    <property type="project" value="UniProtKB-KW"/>
</dbReference>
<dbReference type="CDD" id="cd01486">
    <property type="entry name" value="Apg7"/>
    <property type="match status" value="1"/>
</dbReference>
<dbReference type="FunFam" id="3.40.50.720:FF:000243">
    <property type="entry name" value="Ubiquitin-like modifier-activating enzyme ATG7"/>
    <property type="match status" value="1"/>
</dbReference>
<dbReference type="FunFam" id="3.40.140.70:FF:000001">
    <property type="entry name" value="Ubiquitin-like modifier-activating enzyme atg7"/>
    <property type="match status" value="1"/>
</dbReference>
<dbReference type="Gene3D" id="3.40.50.720">
    <property type="entry name" value="NAD(P)-binding Rossmann-like Domain"/>
    <property type="match status" value="1"/>
</dbReference>
<dbReference type="Gene3D" id="3.40.140.100">
    <property type="entry name" value="Ubiquitin-like modifier-activating enzyme ATG7 C-terminal domain"/>
    <property type="match status" value="1"/>
</dbReference>
<dbReference type="Gene3D" id="3.40.140.70">
    <property type="entry name" value="Ubiquitin-like modifier-activating enzyme ATG7 N-terminal domain"/>
    <property type="match status" value="1"/>
</dbReference>
<dbReference type="InterPro" id="IPR006285">
    <property type="entry name" value="Atg7"/>
</dbReference>
<dbReference type="InterPro" id="IPR032197">
    <property type="entry name" value="Atg7_N"/>
</dbReference>
<dbReference type="InterPro" id="IPR042522">
    <property type="entry name" value="Atg7_N_1"/>
</dbReference>
<dbReference type="InterPro" id="IPR042523">
    <property type="entry name" value="Atg7_N_2"/>
</dbReference>
<dbReference type="InterPro" id="IPR045886">
    <property type="entry name" value="ThiF/MoeB/HesA"/>
</dbReference>
<dbReference type="InterPro" id="IPR000594">
    <property type="entry name" value="ThiF_NAD_FAD-bd"/>
</dbReference>
<dbReference type="InterPro" id="IPR035985">
    <property type="entry name" value="Ubiquitin-activating_enz"/>
</dbReference>
<dbReference type="NCBIfam" id="TIGR01381">
    <property type="entry name" value="E1_like_apg7"/>
    <property type="match status" value="1"/>
</dbReference>
<dbReference type="PANTHER" id="PTHR10953">
    <property type="entry name" value="UBIQUITIN-ACTIVATING ENZYME E1"/>
    <property type="match status" value="1"/>
</dbReference>
<dbReference type="PANTHER" id="PTHR10953:SF3">
    <property type="entry name" value="UBIQUITIN-LIKE MODIFIER-ACTIVATING ENZYME ATG7"/>
    <property type="match status" value="1"/>
</dbReference>
<dbReference type="Pfam" id="PF16420">
    <property type="entry name" value="ATG7_N"/>
    <property type="match status" value="1"/>
</dbReference>
<dbReference type="Pfam" id="PF00899">
    <property type="entry name" value="ThiF"/>
    <property type="match status" value="1"/>
</dbReference>
<dbReference type="SUPFAM" id="SSF69572">
    <property type="entry name" value="Activating enzymes of the ubiquitin-like proteins"/>
    <property type="match status" value="1"/>
</dbReference>
<feature type="chain" id="PRO_0000212817" description="Ubiquitin-like modifier-activating enzyme ATG7">
    <location>
        <begin position="1"/>
        <end position="714"/>
    </location>
</feature>
<feature type="region of interest" description="Disordered" evidence="2">
    <location>
        <begin position="591"/>
        <end position="616"/>
    </location>
</feature>
<feature type="region of interest" description="Disordered" evidence="2">
    <location>
        <begin position="691"/>
        <end position="714"/>
    </location>
</feature>
<feature type="short sequence motif" description="GXGXXG motif">
    <location>
        <begin position="380"/>
        <end position="390"/>
    </location>
</feature>
<feature type="compositionally biased region" description="Acidic residues" evidence="2">
    <location>
        <begin position="695"/>
        <end position="714"/>
    </location>
</feature>
<feature type="active site" description="Glycyl thioester intermediate" evidence="1">
    <location>
        <position position="565"/>
    </location>
</feature>
<name>ATG7_PYRO7</name>
<comment type="function">
    <text evidence="1">E1-like activating enzyme involved in the 2 ubiquitin-like systems required for cytoplasm to vacuole transport (Cvt) and autophagy. Activates ATG12 for its conjugation with ATG5 and ATG8 for its conjugation with phosphatidylethanolamine. Both systems are needed for the ATG8 association to Cvt vesicles and autophagosomes membranes. Autophagy is essential for maintenance of amino acid levels and protein synthesis under nitrogen starvation. Required for selective autophagic degradation of the nucleus (nucleophagy) as well as for mitophagy which contributes to regulate mitochondrial quantity and quality by eliminating the mitochondria to a basal level to fulfill cellular energy requirements and preventing excess ROS production. Plays a role in the regulation of filamentous growth and chronological longevity (By similarity).</text>
</comment>
<comment type="subunit">
    <text evidence="1">Homodimer.</text>
</comment>
<comment type="subcellular location">
    <subcellularLocation>
        <location evidence="1">Cytoplasm</location>
    </subcellularLocation>
    <subcellularLocation>
        <location evidence="1">Preautophagosomal structure</location>
    </subcellularLocation>
</comment>
<comment type="domain">
    <text evidence="1">The GxGxxG motif is important for the function, possibly through binding with ATP.</text>
</comment>
<comment type="similarity">
    <text evidence="3">Belongs to the ATG7 family.</text>
</comment>
<organism>
    <name type="scientific">Pyricularia oryzae (strain 70-15 / ATCC MYA-4617 / FGSC 8958)</name>
    <name type="common">Rice blast fungus</name>
    <name type="synonym">Magnaporthe oryzae</name>
    <dbReference type="NCBI Taxonomy" id="242507"/>
    <lineage>
        <taxon>Eukaryota</taxon>
        <taxon>Fungi</taxon>
        <taxon>Dikarya</taxon>
        <taxon>Ascomycota</taxon>
        <taxon>Pezizomycotina</taxon>
        <taxon>Sordariomycetes</taxon>
        <taxon>Sordariomycetidae</taxon>
        <taxon>Magnaporthales</taxon>
        <taxon>Pyriculariaceae</taxon>
        <taxon>Pyricularia</taxon>
    </lineage>
</organism>
<proteinExistence type="inferred from homology"/>
<reference key="1">
    <citation type="journal article" date="2005" name="Nature">
        <title>The genome sequence of the rice blast fungus Magnaporthe grisea.</title>
        <authorList>
            <person name="Dean R.A."/>
            <person name="Talbot N.J."/>
            <person name="Ebbole D.J."/>
            <person name="Farman M.L."/>
            <person name="Mitchell T.K."/>
            <person name="Orbach M.J."/>
            <person name="Thon M.R."/>
            <person name="Kulkarni R."/>
            <person name="Xu J.-R."/>
            <person name="Pan H."/>
            <person name="Read N.D."/>
            <person name="Lee Y.-H."/>
            <person name="Carbone I."/>
            <person name="Brown D."/>
            <person name="Oh Y.Y."/>
            <person name="Donofrio N."/>
            <person name="Jeong J.S."/>
            <person name="Soanes D.M."/>
            <person name="Djonovic S."/>
            <person name="Kolomiets E."/>
            <person name="Rehmeyer C."/>
            <person name="Li W."/>
            <person name="Harding M."/>
            <person name="Kim S."/>
            <person name="Lebrun M.-H."/>
            <person name="Bohnert H."/>
            <person name="Coughlan S."/>
            <person name="Butler J."/>
            <person name="Calvo S.E."/>
            <person name="Ma L.-J."/>
            <person name="Nicol R."/>
            <person name="Purcell S."/>
            <person name="Nusbaum C."/>
            <person name="Galagan J.E."/>
            <person name="Birren B.W."/>
        </authorList>
    </citation>
    <scope>NUCLEOTIDE SEQUENCE [LARGE SCALE GENOMIC DNA]</scope>
    <source>
        <strain>70-15 / ATCC MYA-4617 / FGSC 8958</strain>
    </source>
</reference>
<accession>Q52CS0</accession>
<accession>A4RIA9</accession>
<accession>G4MUY4</accession>
<protein>
    <recommendedName>
        <fullName>Ubiquitin-like modifier-activating enzyme ATG7</fullName>
    </recommendedName>
    <alternativeName>
        <fullName>ATG12-activating enzyme E1 ATG7</fullName>
    </alternativeName>
    <alternativeName>
        <fullName>Autophagy-related protein 7</fullName>
    </alternativeName>
</protein>
<evidence type="ECO:0000250" key="1"/>
<evidence type="ECO:0000256" key="2">
    <source>
        <dbReference type="SAM" id="MobiDB-lite"/>
    </source>
</evidence>
<evidence type="ECO:0000305" key="3"/>